<dbReference type="EMBL" id="AE005674">
    <property type="protein sequence ID" value="AAN42197.1"/>
    <property type="molecule type" value="Genomic_DNA"/>
</dbReference>
<dbReference type="EMBL" id="AE014073">
    <property type="protein sequence ID" value="AAP16070.1"/>
    <property type="molecule type" value="Genomic_DNA"/>
</dbReference>
<dbReference type="RefSeq" id="NP_706490.1">
    <property type="nucleotide sequence ID" value="NC_004337.2"/>
</dbReference>
<dbReference type="RefSeq" id="WP_000345410.1">
    <property type="nucleotide sequence ID" value="NZ_WPGW01000046.1"/>
</dbReference>
<dbReference type="SMR" id="P0AFK3"/>
<dbReference type="STRING" id="198214.SF0553"/>
<dbReference type="PaxDb" id="198214-SF0553"/>
<dbReference type="GeneID" id="1023463"/>
<dbReference type="GeneID" id="93776730"/>
<dbReference type="KEGG" id="sfl:SF0553"/>
<dbReference type="KEGG" id="sfx:S0561"/>
<dbReference type="PATRIC" id="fig|198214.7.peg.642"/>
<dbReference type="HOGENOM" id="CLU_076589_1_0_6"/>
<dbReference type="Proteomes" id="UP000001006">
    <property type="component" value="Chromosome"/>
</dbReference>
<dbReference type="Proteomes" id="UP000002673">
    <property type="component" value="Chromosome"/>
</dbReference>
<dbReference type="GO" id="GO:0005886">
    <property type="term" value="C:plasma membrane"/>
    <property type="evidence" value="ECO:0007669"/>
    <property type="project" value="UniProtKB-SubCell"/>
</dbReference>
<dbReference type="GO" id="GO:0034257">
    <property type="term" value="F:nicotinamide riboside transmembrane transporter activity"/>
    <property type="evidence" value="ECO:0007669"/>
    <property type="project" value="InterPro"/>
</dbReference>
<dbReference type="InterPro" id="IPR006419">
    <property type="entry name" value="NMN_transpt_PnuC"/>
</dbReference>
<dbReference type="NCBIfam" id="TIGR01528">
    <property type="entry name" value="NMN_trans_PnuC"/>
    <property type="match status" value="1"/>
</dbReference>
<dbReference type="NCBIfam" id="NF011926">
    <property type="entry name" value="PRK15397.1"/>
    <property type="match status" value="1"/>
</dbReference>
<dbReference type="PANTHER" id="PTHR36122">
    <property type="entry name" value="NICOTINAMIDE RIBOSIDE TRANSPORTER PNUC"/>
    <property type="match status" value="1"/>
</dbReference>
<dbReference type="PANTHER" id="PTHR36122:SF2">
    <property type="entry name" value="NICOTINAMIDE RIBOSIDE TRANSPORTER PNUC"/>
    <property type="match status" value="1"/>
</dbReference>
<dbReference type="Pfam" id="PF04973">
    <property type="entry name" value="NMN_transporter"/>
    <property type="match status" value="1"/>
</dbReference>
<comment type="function">
    <text evidence="2">Required for nicotinamide riboside transport across the inner membrane.</text>
</comment>
<comment type="subcellular location">
    <subcellularLocation>
        <location evidence="2">Cell inner membrane</location>
        <topology evidence="2">Multi-pass membrane protein</topology>
    </subcellularLocation>
</comment>
<comment type="similarity">
    <text evidence="4">Belongs to the nicotinamide ribonucleoside (NR) uptake permease (TC 4.B.1) family.</text>
</comment>
<reference key="1">
    <citation type="journal article" date="2002" name="Nucleic Acids Res.">
        <title>Genome sequence of Shigella flexneri 2a: insights into pathogenicity through comparison with genomes of Escherichia coli K12 and O157.</title>
        <authorList>
            <person name="Jin Q."/>
            <person name="Yuan Z."/>
            <person name="Xu J."/>
            <person name="Wang Y."/>
            <person name="Shen Y."/>
            <person name="Lu W."/>
            <person name="Wang J."/>
            <person name="Liu H."/>
            <person name="Yang J."/>
            <person name="Yang F."/>
            <person name="Zhang X."/>
            <person name="Zhang J."/>
            <person name="Yang G."/>
            <person name="Wu H."/>
            <person name="Qu D."/>
            <person name="Dong J."/>
            <person name="Sun L."/>
            <person name="Xue Y."/>
            <person name="Zhao A."/>
            <person name="Gao Y."/>
            <person name="Zhu J."/>
            <person name="Kan B."/>
            <person name="Ding K."/>
            <person name="Chen S."/>
            <person name="Cheng H."/>
            <person name="Yao Z."/>
            <person name="He B."/>
            <person name="Chen R."/>
            <person name="Ma D."/>
            <person name="Qiang B."/>
            <person name="Wen Y."/>
            <person name="Hou Y."/>
            <person name="Yu J."/>
        </authorList>
    </citation>
    <scope>NUCLEOTIDE SEQUENCE [LARGE SCALE GENOMIC DNA]</scope>
    <source>
        <strain>301 / Serotype 2a</strain>
    </source>
</reference>
<reference key="2">
    <citation type="journal article" date="2003" name="Infect. Immun.">
        <title>Complete genome sequence and comparative genomics of Shigella flexneri serotype 2a strain 2457T.</title>
        <authorList>
            <person name="Wei J."/>
            <person name="Goldberg M.B."/>
            <person name="Burland V."/>
            <person name="Venkatesan M.M."/>
            <person name="Deng W."/>
            <person name="Fournier G."/>
            <person name="Mayhew G.F."/>
            <person name="Plunkett G. III"/>
            <person name="Rose D.J."/>
            <person name="Darling A."/>
            <person name="Mau B."/>
            <person name="Perna N.T."/>
            <person name="Payne S.M."/>
            <person name="Runyen-Janecky L.J."/>
            <person name="Zhou S."/>
            <person name="Schwartz D.C."/>
            <person name="Blattner F.R."/>
        </authorList>
    </citation>
    <scope>NUCLEOTIDE SEQUENCE [LARGE SCALE GENOMIC DNA]</scope>
    <source>
        <strain>ATCC 700930 / 2457T / Serotype 2a</strain>
    </source>
</reference>
<name>PNUC_SHIFL</name>
<gene>
    <name type="primary">pnuC</name>
    <name type="ordered locus">SF0553</name>
    <name type="ordered locus">S0561</name>
</gene>
<keyword id="KW-0997">Cell inner membrane</keyword>
<keyword id="KW-1003">Cell membrane</keyword>
<keyword id="KW-0472">Membrane</keyword>
<keyword id="KW-0520">NAD</keyword>
<keyword id="KW-1185">Reference proteome</keyword>
<keyword id="KW-0812">Transmembrane</keyword>
<keyword id="KW-1133">Transmembrane helix</keyword>
<keyword id="KW-0813">Transport</keyword>
<feature type="chain" id="PRO_0000058489" description="Nicotinamide riboside transporter PnuC">
    <location>
        <begin position="1"/>
        <end position="239"/>
    </location>
</feature>
<feature type="topological domain" description="Cytoplasmic" evidence="3">
    <location>
        <begin position="1"/>
        <end position="21"/>
    </location>
</feature>
<feature type="transmembrane region" description="Helical" evidence="3">
    <location>
        <begin position="22"/>
        <end position="42"/>
    </location>
</feature>
<feature type="topological domain" description="Periplasmic" evidence="3">
    <location>
        <begin position="43"/>
        <end position="48"/>
    </location>
</feature>
<feature type="transmembrane region" description="Helical" evidence="3">
    <location>
        <begin position="49"/>
        <end position="68"/>
    </location>
</feature>
<feature type="topological domain" description="Cytoplasmic" evidence="3">
    <location>
        <begin position="69"/>
        <end position="71"/>
    </location>
</feature>
<feature type="transmembrane region" description="Helical" evidence="3">
    <location>
        <begin position="72"/>
        <end position="89"/>
    </location>
</feature>
<feature type="topological domain" description="Periplasmic" evidence="3">
    <location>
        <begin position="90"/>
        <end position="109"/>
    </location>
</feature>
<feature type="transmembrane region" description="Helical" evidence="3">
    <location>
        <begin position="110"/>
        <end position="127"/>
    </location>
</feature>
<feature type="topological domain" description="Cytoplasmic" evidence="3">
    <location>
        <begin position="128"/>
        <end position="157"/>
    </location>
</feature>
<feature type="transmembrane region" description="Helical" evidence="3">
    <location>
        <begin position="158"/>
        <end position="177"/>
    </location>
</feature>
<feature type="topological domain" description="Periplasmic" evidence="3">
    <location>
        <begin position="178"/>
        <end position="183"/>
    </location>
</feature>
<feature type="transmembrane region" description="Helical" evidence="3">
    <location>
        <begin position="184"/>
        <end position="206"/>
    </location>
</feature>
<feature type="topological domain" description="Cytoplasmic" evidence="3">
    <location>
        <begin position="207"/>
        <end position="239"/>
    </location>
</feature>
<feature type="binding site" evidence="1">
    <location>
        <position position="188"/>
    </location>
    <ligand>
        <name>beta-nicotinamide D-riboside</name>
        <dbReference type="ChEBI" id="CHEBI:15927"/>
    </ligand>
</feature>
<feature type="binding site" evidence="1">
    <location>
        <position position="192"/>
    </location>
    <ligand>
        <name>beta-nicotinamide D-riboside</name>
        <dbReference type="ChEBI" id="CHEBI:15927"/>
    </ligand>
</feature>
<sequence length="239" mass="26996">MDFFSVQNILVHIPIGAGGYDLSWIEAVGTIAGLLCIGLASLEKISNYFFGLINVTLFGIIFFQIQLYASLLLQVFFFAANIYGWYAWSRQTSQNEAELKIRWLPLPKALSWLAVCVVSIGLMTVFINPVFAFLTRVAVMIMQALGLQVVMPELQPDAFPFWDSCMMVLSIVAMILMTRKYVENWLLWVIINVISVVIFALQGVYAMSLEYIILTFIALNGSRMWINSARERGSRALSH</sequence>
<proteinExistence type="inferred from homology"/>
<evidence type="ECO:0000250" key="1">
    <source>
        <dbReference type="UniProtKB" id="D2ZZC1"/>
    </source>
</evidence>
<evidence type="ECO:0000250" key="2">
    <source>
        <dbReference type="UniProtKB" id="Q57425"/>
    </source>
</evidence>
<evidence type="ECO:0000255" key="3"/>
<evidence type="ECO:0000305" key="4"/>
<protein>
    <recommendedName>
        <fullName>Nicotinamide riboside transporter PnuC</fullName>
    </recommendedName>
</protein>
<accession>P0AFK3</accession>
<accession>P31215</accession>
<accession>P77227</accession>
<organism>
    <name type="scientific">Shigella flexneri</name>
    <dbReference type="NCBI Taxonomy" id="623"/>
    <lineage>
        <taxon>Bacteria</taxon>
        <taxon>Pseudomonadati</taxon>
        <taxon>Pseudomonadota</taxon>
        <taxon>Gammaproteobacteria</taxon>
        <taxon>Enterobacterales</taxon>
        <taxon>Enterobacteriaceae</taxon>
        <taxon>Shigella</taxon>
    </lineage>
</organism>